<name>YE087_YEAST</name>
<organism>
    <name type="scientific">Saccharomyces cerevisiae (strain ATCC 204508 / S288c)</name>
    <name type="common">Baker's yeast</name>
    <dbReference type="NCBI Taxonomy" id="559292"/>
    <lineage>
        <taxon>Eukaryota</taxon>
        <taxon>Fungi</taxon>
        <taxon>Dikarya</taxon>
        <taxon>Ascomycota</taxon>
        <taxon>Saccharomycotina</taxon>
        <taxon>Saccharomycetes</taxon>
        <taxon>Saccharomycetales</taxon>
        <taxon>Saccharomycetaceae</taxon>
        <taxon>Saccharomyces</taxon>
    </lineage>
</organism>
<proteinExistence type="uncertain"/>
<feature type="signal peptide" evidence="1">
    <location>
        <begin position="1"/>
        <end position="17"/>
    </location>
</feature>
<feature type="chain" id="PRO_0000430997" description="Putative uncharacterized protein YER087C-A">
    <location>
        <begin position="18"/>
        <end position="183"/>
    </location>
</feature>
<accession>A0A023PYE9</accession>
<evidence type="ECO:0000255" key="1"/>
<evidence type="ECO:0000305" key="2"/>
<evidence type="ECO:0000305" key="3">
    <source>
    </source>
</evidence>
<evidence type="ECO:0000312" key="4">
    <source>
        <dbReference type="SGD" id="S000028753"/>
    </source>
</evidence>
<keyword id="KW-0732">Signal</keyword>
<dbReference type="EMBL" id="KJ412235">
    <property type="protein sequence ID" value="AHX39278.1"/>
    <property type="molecule type" value="Genomic_DNA"/>
</dbReference>
<dbReference type="PaxDb" id="4932-YER087C-A"/>
<dbReference type="EnsemblFungi" id="YER087C-A_mRNA">
    <property type="protein sequence ID" value="YER087C-A"/>
    <property type="gene ID" value="YER087C-A"/>
</dbReference>
<dbReference type="AGR" id="SGD:S000028753"/>
<dbReference type="SGD" id="S000028753">
    <property type="gene designation" value="YER087C-A"/>
</dbReference>
<dbReference type="HOGENOM" id="CLU_1475937_0_0_1"/>
<protein>
    <recommendedName>
        <fullName evidence="2">Putative uncharacterized protein YER087C-A</fullName>
    </recommendedName>
</protein>
<reference key="1">
    <citation type="journal article" date="1997" name="Nature">
        <title>The nucleotide sequence of Saccharomyces cerevisiae chromosome V.</title>
        <authorList>
            <person name="Dietrich F.S."/>
            <person name="Mulligan J.T."/>
            <person name="Hennessy K.M."/>
            <person name="Yelton M.A."/>
            <person name="Allen E."/>
            <person name="Araujo R."/>
            <person name="Aviles E."/>
            <person name="Berno A."/>
            <person name="Brennan T."/>
            <person name="Carpenter J."/>
            <person name="Chen E."/>
            <person name="Cherry J.M."/>
            <person name="Chung E."/>
            <person name="Duncan M."/>
            <person name="Guzman E."/>
            <person name="Hartzell G."/>
            <person name="Hunicke-Smith S."/>
            <person name="Hyman R.W."/>
            <person name="Kayser A."/>
            <person name="Komp C."/>
            <person name="Lashkari D."/>
            <person name="Lew H."/>
            <person name="Lin D."/>
            <person name="Mosedale D."/>
            <person name="Nakahara K."/>
            <person name="Namath A."/>
            <person name="Norgren R."/>
            <person name="Oefner P."/>
            <person name="Oh C."/>
            <person name="Petel F.X."/>
            <person name="Roberts D."/>
            <person name="Sehl P."/>
            <person name="Schramm S."/>
            <person name="Shogren T."/>
            <person name="Smith V."/>
            <person name="Taylor P."/>
            <person name="Wei Y."/>
            <person name="Botstein D."/>
            <person name="Davis R.W."/>
        </authorList>
    </citation>
    <scope>NUCLEOTIDE SEQUENCE [LARGE SCALE GENOMIC DNA]</scope>
    <source>
        <strain>ATCC 204508 / S288c</strain>
    </source>
</reference>
<reference key="2">
    <citation type="journal article" date="2014" name="G3 (Bethesda)">
        <title>The reference genome sequence of Saccharomyces cerevisiae: Then and now.</title>
        <authorList>
            <person name="Engel S.R."/>
            <person name="Dietrich F.S."/>
            <person name="Fisk D.G."/>
            <person name="Binkley G."/>
            <person name="Balakrishnan R."/>
            <person name="Costanzo M.C."/>
            <person name="Dwight S.S."/>
            <person name="Hitz B.C."/>
            <person name="Karra K."/>
            <person name="Nash R.S."/>
            <person name="Weng S."/>
            <person name="Wong E.D."/>
            <person name="Lloyd P."/>
            <person name="Skrzypek M.S."/>
            <person name="Miyasato S.R."/>
            <person name="Simison M."/>
            <person name="Cherry J.M."/>
        </authorList>
    </citation>
    <scope>GENOME REANNOTATION</scope>
    <source>
        <strain>ATCC 204508 / S288c</strain>
    </source>
</reference>
<comment type="miscellaneous">
    <text evidence="2">Partially overlaps AIM10.</text>
</comment>
<comment type="caution">
    <text evidence="3">Product of a dubious gene prediction unlikely to encode a functional protein. Because of that it is not part of the S.cerevisiae S288c complete/reference proteome set.</text>
</comment>
<sequence>MVLFILVLYTCIQDGNGLLCGYISFSNTPMTSAKCWIGTVCFSIPCSFLVHFHCSSLHLFSNCFLHRSFSPHLMPRTSISTLGQLFEPTITHNGIPMACDNFILAPIPSFSLNWSRMSFCKFCMVGSFSSSDLTSCNLCEFSGLFGPVQIDTLYGAIIAGHLNPLESRPSSAIAPTSLLTPMP</sequence>
<gene>
    <name evidence="4" type="ordered locus">YER087C-A</name>
</gene>